<protein>
    <recommendedName>
        <fullName evidence="5">Zealexin A1 synthase</fullName>
        <ecNumber evidence="3">1.14.14.160</ecNumber>
    </recommendedName>
    <alternativeName>
        <fullName evidence="4">Cytochrome P450 71Z18</fullName>
    </alternativeName>
</protein>
<organism>
    <name type="scientific">Zea mays</name>
    <name type="common">Maize</name>
    <dbReference type="NCBI Taxonomy" id="4577"/>
    <lineage>
        <taxon>Eukaryota</taxon>
        <taxon>Viridiplantae</taxon>
        <taxon>Streptophyta</taxon>
        <taxon>Embryophyta</taxon>
        <taxon>Tracheophyta</taxon>
        <taxon>Spermatophyta</taxon>
        <taxon>Magnoliopsida</taxon>
        <taxon>Liliopsida</taxon>
        <taxon>Poales</taxon>
        <taxon>Poaceae</taxon>
        <taxon>PACMAD clade</taxon>
        <taxon>Panicoideae</taxon>
        <taxon>Andropogonodae</taxon>
        <taxon>Andropogoneae</taxon>
        <taxon>Tripsacinae</taxon>
        <taxon>Zea</taxon>
    </lineage>
</organism>
<proteinExistence type="evidence at protein level"/>
<name>C71Z8_MAIZE</name>
<dbReference type="EC" id="1.14.14.160" evidence="3"/>
<dbReference type="EMBL" id="CM000781">
    <property type="protein sequence ID" value="AQK65312.1"/>
    <property type="molecule type" value="Genomic_DNA"/>
</dbReference>
<dbReference type="EMBL" id="BT041181">
    <property type="protein sequence ID" value="ACF86186.1"/>
    <property type="molecule type" value="mRNA"/>
</dbReference>
<dbReference type="RefSeq" id="NP_001141366.1">
    <property type="nucleotide sequence ID" value="NM_001147894.1"/>
</dbReference>
<dbReference type="SMR" id="B4FVP3"/>
<dbReference type="FunCoup" id="B4FVP3">
    <property type="interactions" value="369"/>
</dbReference>
<dbReference type="STRING" id="4577.B4FVP3"/>
<dbReference type="EnsemblPlants" id="Zm00001eb222660_T001">
    <property type="protein sequence ID" value="Zm00001eb222660_P001"/>
    <property type="gene ID" value="Zm00001eb222660"/>
</dbReference>
<dbReference type="GeneID" id="100273457"/>
<dbReference type="Gramene" id="Zm00001eb222660_T001">
    <property type="protein sequence ID" value="Zm00001eb222660_P001"/>
    <property type="gene ID" value="Zm00001eb222660"/>
</dbReference>
<dbReference type="KEGG" id="zma:100273457"/>
<dbReference type="InParanoid" id="B4FVP3"/>
<dbReference type="OMA" id="XTANIIC"/>
<dbReference type="OrthoDB" id="620821at2759"/>
<dbReference type="BioCyc" id="MetaCyc:MONOMER-20518"/>
<dbReference type="BRENDA" id="1.14.14.160">
    <property type="organism ID" value="6752"/>
</dbReference>
<dbReference type="Proteomes" id="UP000007305">
    <property type="component" value="Chromosome 5"/>
</dbReference>
<dbReference type="ExpressionAtlas" id="B4FVP3">
    <property type="expression patterns" value="baseline and differential"/>
</dbReference>
<dbReference type="GO" id="GO:0016020">
    <property type="term" value="C:membrane"/>
    <property type="evidence" value="ECO:0007669"/>
    <property type="project" value="UniProtKB-SubCell"/>
</dbReference>
<dbReference type="GO" id="GO:0020037">
    <property type="term" value="F:heme binding"/>
    <property type="evidence" value="ECO:0007669"/>
    <property type="project" value="InterPro"/>
</dbReference>
<dbReference type="GO" id="GO:0005506">
    <property type="term" value="F:iron ion binding"/>
    <property type="evidence" value="ECO:0007669"/>
    <property type="project" value="InterPro"/>
</dbReference>
<dbReference type="GO" id="GO:0016709">
    <property type="term" value="F:oxidoreductase activity, acting on paired donors, with incorporation or reduction of molecular oxygen, NAD(P)H as one donor, and incorporation of one atom of oxygen"/>
    <property type="evidence" value="ECO:0000314"/>
    <property type="project" value="UniProtKB"/>
</dbReference>
<dbReference type="GO" id="GO:0010333">
    <property type="term" value="F:terpene synthase activity"/>
    <property type="evidence" value="ECO:0000314"/>
    <property type="project" value="UniProtKB"/>
</dbReference>
<dbReference type="GO" id="GO:0006952">
    <property type="term" value="P:defense response"/>
    <property type="evidence" value="ECO:0007669"/>
    <property type="project" value="UniProtKB-KW"/>
</dbReference>
<dbReference type="GO" id="GO:0051502">
    <property type="term" value="P:diterpene phytoalexin biosynthetic process"/>
    <property type="evidence" value="ECO:0000314"/>
    <property type="project" value="UniProtKB"/>
</dbReference>
<dbReference type="CDD" id="cd11072">
    <property type="entry name" value="CYP71-like"/>
    <property type="match status" value="1"/>
</dbReference>
<dbReference type="FunFam" id="1.10.630.10:FF:000008">
    <property type="entry name" value="Cytochrome P450 71D8"/>
    <property type="match status" value="1"/>
</dbReference>
<dbReference type="Gene3D" id="1.10.630.10">
    <property type="entry name" value="Cytochrome P450"/>
    <property type="match status" value="1"/>
</dbReference>
<dbReference type="InterPro" id="IPR001128">
    <property type="entry name" value="Cyt_P450"/>
</dbReference>
<dbReference type="InterPro" id="IPR017972">
    <property type="entry name" value="Cyt_P450_CS"/>
</dbReference>
<dbReference type="InterPro" id="IPR002401">
    <property type="entry name" value="Cyt_P450_E_grp-I"/>
</dbReference>
<dbReference type="InterPro" id="IPR036396">
    <property type="entry name" value="Cyt_P450_sf"/>
</dbReference>
<dbReference type="PANTHER" id="PTHR47955:SF11">
    <property type="entry name" value="4-HYDROXYPHENYLACETALDEHYDE OXIME MONOOXYGENASE"/>
    <property type="match status" value="1"/>
</dbReference>
<dbReference type="PANTHER" id="PTHR47955">
    <property type="entry name" value="CYTOCHROME P450 FAMILY 71 PROTEIN"/>
    <property type="match status" value="1"/>
</dbReference>
<dbReference type="Pfam" id="PF00067">
    <property type="entry name" value="p450"/>
    <property type="match status" value="1"/>
</dbReference>
<dbReference type="PRINTS" id="PR00463">
    <property type="entry name" value="EP450I"/>
</dbReference>
<dbReference type="PRINTS" id="PR00385">
    <property type="entry name" value="P450"/>
</dbReference>
<dbReference type="SUPFAM" id="SSF48264">
    <property type="entry name" value="Cytochrome P450"/>
    <property type="match status" value="1"/>
</dbReference>
<dbReference type="PROSITE" id="PS00086">
    <property type="entry name" value="CYTOCHROME_P450"/>
    <property type="match status" value="1"/>
</dbReference>
<accession>B4FVP3</accession>
<reference key="1">
    <citation type="journal article" date="2009" name="Science">
        <title>The B73 maize genome: complexity, diversity, and dynamics.</title>
        <authorList>
            <person name="Schnable P.S."/>
            <person name="Ware D."/>
            <person name="Fulton R.S."/>
            <person name="Stein J.C."/>
            <person name="Wei F."/>
            <person name="Pasternak S."/>
            <person name="Liang C."/>
            <person name="Zhang J."/>
            <person name="Fulton L."/>
            <person name="Graves T.A."/>
            <person name="Minx P."/>
            <person name="Reily A.D."/>
            <person name="Courtney L."/>
            <person name="Kruchowski S.S."/>
            <person name="Tomlinson C."/>
            <person name="Strong C."/>
            <person name="Delehaunty K."/>
            <person name="Fronick C."/>
            <person name="Courtney B."/>
            <person name="Rock S.M."/>
            <person name="Belter E."/>
            <person name="Du F."/>
            <person name="Kim K."/>
            <person name="Abbott R.M."/>
            <person name="Cotton M."/>
            <person name="Levy A."/>
            <person name="Marchetto P."/>
            <person name="Ochoa K."/>
            <person name="Jackson S.M."/>
            <person name="Gillam B."/>
            <person name="Chen W."/>
            <person name="Yan L."/>
            <person name="Higginbotham J."/>
            <person name="Cardenas M."/>
            <person name="Waligorski J."/>
            <person name="Applebaum E."/>
            <person name="Phelps L."/>
            <person name="Falcone J."/>
            <person name="Kanchi K."/>
            <person name="Thane T."/>
            <person name="Scimone A."/>
            <person name="Thane N."/>
            <person name="Henke J."/>
            <person name="Wang T."/>
            <person name="Ruppert J."/>
            <person name="Shah N."/>
            <person name="Rotter K."/>
            <person name="Hodges J."/>
            <person name="Ingenthron E."/>
            <person name="Cordes M."/>
            <person name="Kohlberg S."/>
            <person name="Sgro J."/>
            <person name="Delgado B."/>
            <person name="Mead K."/>
            <person name="Chinwalla A."/>
            <person name="Leonard S."/>
            <person name="Crouse K."/>
            <person name="Collura K."/>
            <person name="Kudrna D."/>
            <person name="Currie J."/>
            <person name="He R."/>
            <person name="Angelova A."/>
            <person name="Rajasekar S."/>
            <person name="Mueller T."/>
            <person name="Lomeli R."/>
            <person name="Scara G."/>
            <person name="Ko A."/>
            <person name="Delaney K."/>
            <person name="Wissotski M."/>
            <person name="Lopez G."/>
            <person name="Campos D."/>
            <person name="Braidotti M."/>
            <person name="Ashley E."/>
            <person name="Golser W."/>
            <person name="Kim H."/>
            <person name="Lee S."/>
            <person name="Lin J."/>
            <person name="Dujmic Z."/>
            <person name="Kim W."/>
            <person name="Talag J."/>
            <person name="Zuccolo A."/>
            <person name="Fan C."/>
            <person name="Sebastian A."/>
            <person name="Kramer M."/>
            <person name="Spiegel L."/>
            <person name="Nascimento L."/>
            <person name="Zutavern T."/>
            <person name="Miller B."/>
            <person name="Ambroise C."/>
            <person name="Muller S."/>
            <person name="Spooner W."/>
            <person name="Narechania A."/>
            <person name="Ren L."/>
            <person name="Wei S."/>
            <person name="Kumari S."/>
            <person name="Faga B."/>
            <person name="Levy M.J."/>
            <person name="McMahan L."/>
            <person name="Van Buren P."/>
            <person name="Vaughn M.W."/>
            <person name="Ying K."/>
            <person name="Yeh C.-T."/>
            <person name="Emrich S.J."/>
            <person name="Jia Y."/>
            <person name="Kalyanaraman A."/>
            <person name="Hsia A.-P."/>
            <person name="Barbazuk W.B."/>
            <person name="Baucom R.S."/>
            <person name="Brutnell T.P."/>
            <person name="Carpita N.C."/>
            <person name="Chaparro C."/>
            <person name="Chia J.-M."/>
            <person name="Deragon J.-M."/>
            <person name="Estill J.C."/>
            <person name="Fu Y."/>
            <person name="Jeddeloh J.A."/>
            <person name="Han Y."/>
            <person name="Lee H."/>
            <person name="Li P."/>
            <person name="Lisch D.R."/>
            <person name="Liu S."/>
            <person name="Liu Z."/>
            <person name="Nagel D.H."/>
            <person name="McCann M.C."/>
            <person name="SanMiguel P."/>
            <person name="Myers A.M."/>
            <person name="Nettleton D."/>
            <person name="Nguyen J."/>
            <person name="Penning B.W."/>
            <person name="Ponnala L."/>
            <person name="Schneider K.L."/>
            <person name="Schwartz D.C."/>
            <person name="Sharma A."/>
            <person name="Soderlund C."/>
            <person name="Springer N.M."/>
            <person name="Sun Q."/>
            <person name="Wang H."/>
            <person name="Waterman M."/>
            <person name="Westerman R."/>
            <person name="Wolfgruber T.K."/>
            <person name="Yang L."/>
            <person name="Yu Y."/>
            <person name="Zhang L."/>
            <person name="Zhou S."/>
            <person name="Zhu Q."/>
            <person name="Bennetzen J.L."/>
            <person name="Dawe R.K."/>
            <person name="Jiang J."/>
            <person name="Jiang N."/>
            <person name="Presting G.G."/>
            <person name="Wessler S.R."/>
            <person name="Aluru S."/>
            <person name="Martienssen R.A."/>
            <person name="Clifton S.W."/>
            <person name="McCombie W.R."/>
            <person name="Wing R.A."/>
            <person name="Wilson R.K."/>
        </authorList>
    </citation>
    <scope>NUCLEOTIDE SEQUENCE [LARGE SCALE GENOMIC DNA]</scope>
    <source>
        <strain>cv. B73</strain>
    </source>
</reference>
<reference key="2">
    <citation type="journal article" date="2009" name="PLoS Genet.">
        <title>Sequencing, mapping, and analysis of 27,455 maize full-length cDNAs.</title>
        <authorList>
            <person name="Soderlund C."/>
            <person name="Descour A."/>
            <person name="Kudrna D."/>
            <person name="Bomhoff M."/>
            <person name="Boyd L."/>
            <person name="Currie J."/>
            <person name="Angelova A."/>
            <person name="Collura K."/>
            <person name="Wissotski M."/>
            <person name="Ashley E."/>
            <person name="Morrow D."/>
            <person name="Fernandes J."/>
            <person name="Walbot V."/>
            <person name="Yu Y."/>
        </authorList>
    </citation>
    <scope>NUCLEOTIDE SEQUENCE [LARGE SCALE MRNA]</scope>
    <source>
        <strain>cv. B73</strain>
    </source>
</reference>
<reference key="3">
    <citation type="journal article" date="2016" name="Phytochemistry">
        <title>Characterization of CYP71Z18 indicates a role in maize zealexin biosynthesis.</title>
        <authorList>
            <person name="Mao H."/>
            <person name="Liu J."/>
            <person name="Ren F."/>
            <person name="Peters R.J."/>
            <person name="Wang Q."/>
        </authorList>
    </citation>
    <scope>FUNCTION</scope>
    <scope>CATALYTIC ACTIVITY</scope>
</reference>
<feature type="chain" id="PRO_0000447767" description="Zealexin A1 synthase">
    <location>
        <begin position="1"/>
        <end position="505"/>
    </location>
</feature>
<feature type="transmembrane region" description="Helical" evidence="2">
    <location>
        <begin position="7"/>
        <end position="26"/>
    </location>
</feature>
<feature type="binding site" description="axial binding residue" evidence="1">
    <location>
        <position position="442"/>
    </location>
    <ligand>
        <name>heme</name>
        <dbReference type="ChEBI" id="CHEBI:30413"/>
    </ligand>
    <ligandPart>
        <name>Fe</name>
        <dbReference type="ChEBI" id="CHEBI:18248"/>
    </ligandPart>
</feature>
<evidence type="ECO:0000250" key="1">
    <source>
        <dbReference type="UniProtKB" id="Q96242"/>
    </source>
</evidence>
<evidence type="ECO:0000255" key="2"/>
<evidence type="ECO:0000269" key="3">
    <source>
    </source>
</evidence>
<evidence type="ECO:0000303" key="4">
    <source>
    </source>
</evidence>
<evidence type="ECO:0000305" key="5"/>
<evidence type="ECO:0000312" key="6">
    <source>
        <dbReference type="EMBL" id="AQK65312.1"/>
    </source>
</evidence>
<keyword id="KW-0349">Heme</keyword>
<keyword id="KW-0408">Iron</keyword>
<keyword id="KW-0472">Membrane</keyword>
<keyword id="KW-0479">Metal-binding</keyword>
<keyword id="KW-0503">Monooxygenase</keyword>
<keyword id="KW-0560">Oxidoreductase</keyword>
<keyword id="KW-0611">Plant defense</keyword>
<keyword id="KW-1185">Reference proteome</keyword>
<keyword id="KW-0812">Transmembrane</keyword>
<keyword id="KW-1133">Transmembrane helix</keyword>
<comment type="function">
    <text evidence="3">Involved in production of the antifungal phytoalexin zealexin A1 (PubMed:26471326). The enzyme sequentially oxidizes(S)-beta-macrocarpene via alcohol and aldehyde intermediates to form zealexin A1, a maize phytoalexin that provides biochemical protection against fungal infection (PubMed:26471326).</text>
</comment>
<comment type="catalytic activity">
    <reaction evidence="3">
        <text>(S)-beta-macrocarpene + 3 reduced [NADPH--hemoprotein reductase] + 3 O2 = zealexin A1 + 3 oxidized [NADPH--hemoprotein reductase] + 4 H2O + 4 H(+)</text>
        <dbReference type="Rhea" id="RHEA:57544"/>
        <dbReference type="Rhea" id="RHEA-COMP:11964"/>
        <dbReference type="Rhea" id="RHEA-COMP:11965"/>
        <dbReference type="ChEBI" id="CHEBI:15377"/>
        <dbReference type="ChEBI" id="CHEBI:15378"/>
        <dbReference type="ChEBI" id="CHEBI:15379"/>
        <dbReference type="ChEBI" id="CHEBI:57618"/>
        <dbReference type="ChEBI" id="CHEBI:58210"/>
        <dbReference type="ChEBI" id="CHEBI:61344"/>
        <dbReference type="ChEBI" id="CHEBI:141852"/>
        <dbReference type="EC" id="1.14.14.160"/>
    </reaction>
    <physiologicalReaction direction="left-to-right" evidence="3">
        <dbReference type="Rhea" id="RHEA:57545"/>
    </physiologicalReaction>
</comment>
<comment type="cofactor">
    <cofactor evidence="1">
        <name>heme</name>
        <dbReference type="ChEBI" id="CHEBI:30413"/>
    </cofactor>
</comment>
<comment type="subcellular location">
    <subcellularLocation>
        <location evidence="2">Membrane</location>
        <topology evidence="5">Single-pass membrane protein</topology>
    </subcellularLocation>
</comment>
<comment type="similarity">
    <text evidence="5">Belongs to the cytochrome P450 family.</text>
</comment>
<gene>
    <name evidence="4" type="primary">CYP71Z18</name>
    <name evidence="6" type="ORF">ZEAMMB73_Zm00001d014134</name>
</gene>
<sequence length="505" mass="56021">MEDKVLIAVGTVAVVAVLSKLKSAVTKPKLNLPPGPWTLPLIGSIHHIVSNPLPYRAMRELAHKHGPLMMLWLGEVPTLVVSSPEAAQAITKTHDVSFADRHINSTVDILTFNGMDMVFGSYGEQWRQLRKLSVLELLSAARVQSFQRIREEEVARFMRSLAASASAGATVDLSKMISSFINDTFVRESIGSRCKYQDEYLAALDTAIRVAAELSVGNIFPSSRVLQSLSTARRKAIASRDEMARILGQIIRETKESMDQGDKTSNESMISVLLRLQKDAGLPIELTDNVVMALMFDLFGAGSDTSSTTLTWCMTELVRYPATMAKAQAEVREAFKGKTTITEDDLSTANLRYLKLVVKEALRLHCPVPLLLPRKCREACQVMGYDIPKGTCVFVNVWAICRDPRYWEDAEEFKPERFENSNLDYKGTYYEYLPFGSGRRMCPGANLGVANLELALASLLYHFDWKLPSGQEPKDVDVWEAAGLVAKKNIGLVLHPVSHIAPVNA</sequence>